<name>RLMH_TOLAT</name>
<keyword id="KW-0963">Cytoplasm</keyword>
<keyword id="KW-0489">Methyltransferase</keyword>
<keyword id="KW-1185">Reference proteome</keyword>
<keyword id="KW-0698">rRNA processing</keyword>
<keyword id="KW-0949">S-adenosyl-L-methionine</keyword>
<keyword id="KW-0808">Transferase</keyword>
<accession>C4LCB6</accession>
<comment type="function">
    <text evidence="1">Specifically methylates the pseudouridine at position 1915 (m3Psi1915) in 23S rRNA.</text>
</comment>
<comment type="catalytic activity">
    <reaction evidence="1">
        <text>pseudouridine(1915) in 23S rRNA + S-adenosyl-L-methionine = N(3)-methylpseudouridine(1915) in 23S rRNA + S-adenosyl-L-homocysteine + H(+)</text>
        <dbReference type="Rhea" id="RHEA:42752"/>
        <dbReference type="Rhea" id="RHEA-COMP:10221"/>
        <dbReference type="Rhea" id="RHEA-COMP:10222"/>
        <dbReference type="ChEBI" id="CHEBI:15378"/>
        <dbReference type="ChEBI" id="CHEBI:57856"/>
        <dbReference type="ChEBI" id="CHEBI:59789"/>
        <dbReference type="ChEBI" id="CHEBI:65314"/>
        <dbReference type="ChEBI" id="CHEBI:74486"/>
        <dbReference type="EC" id="2.1.1.177"/>
    </reaction>
</comment>
<comment type="subunit">
    <text evidence="1">Homodimer.</text>
</comment>
<comment type="subcellular location">
    <subcellularLocation>
        <location evidence="1">Cytoplasm</location>
    </subcellularLocation>
</comment>
<comment type="similarity">
    <text evidence="1">Belongs to the RNA methyltransferase RlmH family.</text>
</comment>
<organism>
    <name type="scientific">Tolumonas auensis (strain DSM 9187 / NBRC 110442 / TA 4)</name>
    <dbReference type="NCBI Taxonomy" id="595494"/>
    <lineage>
        <taxon>Bacteria</taxon>
        <taxon>Pseudomonadati</taxon>
        <taxon>Pseudomonadota</taxon>
        <taxon>Gammaproteobacteria</taxon>
        <taxon>Aeromonadales</taxon>
        <taxon>Aeromonadaceae</taxon>
        <taxon>Tolumonas</taxon>
    </lineage>
</organism>
<reference key="1">
    <citation type="submission" date="2009-05" db="EMBL/GenBank/DDBJ databases">
        <title>Complete sequence of Tolumonas auensis DSM 9187.</title>
        <authorList>
            <consortium name="US DOE Joint Genome Institute"/>
            <person name="Lucas S."/>
            <person name="Copeland A."/>
            <person name="Lapidus A."/>
            <person name="Glavina del Rio T."/>
            <person name="Tice H."/>
            <person name="Bruce D."/>
            <person name="Goodwin L."/>
            <person name="Pitluck S."/>
            <person name="Chertkov O."/>
            <person name="Brettin T."/>
            <person name="Detter J.C."/>
            <person name="Han C."/>
            <person name="Larimer F."/>
            <person name="Land M."/>
            <person name="Hauser L."/>
            <person name="Kyrpides N."/>
            <person name="Mikhailova N."/>
            <person name="Spring S."/>
            <person name="Beller H."/>
        </authorList>
    </citation>
    <scope>NUCLEOTIDE SEQUENCE [LARGE SCALE GENOMIC DNA]</scope>
    <source>
        <strain>DSM 9187 / NBRC 110442 / TA 4</strain>
    </source>
</reference>
<evidence type="ECO:0000255" key="1">
    <source>
        <dbReference type="HAMAP-Rule" id="MF_00658"/>
    </source>
</evidence>
<gene>
    <name evidence="1" type="primary">rlmH</name>
    <name type="ordered locus">Tola_2827</name>
</gene>
<feature type="chain" id="PRO_1000212467" description="Ribosomal RNA large subunit methyltransferase H">
    <location>
        <begin position="1"/>
        <end position="156"/>
    </location>
</feature>
<feature type="binding site" evidence="1">
    <location>
        <position position="73"/>
    </location>
    <ligand>
        <name>S-adenosyl-L-methionine</name>
        <dbReference type="ChEBI" id="CHEBI:59789"/>
    </ligand>
</feature>
<feature type="binding site" evidence="1">
    <location>
        <position position="104"/>
    </location>
    <ligand>
        <name>S-adenosyl-L-methionine</name>
        <dbReference type="ChEBI" id="CHEBI:59789"/>
    </ligand>
</feature>
<feature type="binding site" evidence="1">
    <location>
        <begin position="123"/>
        <end position="128"/>
    </location>
    <ligand>
        <name>S-adenosyl-L-methionine</name>
        <dbReference type="ChEBI" id="CHEBI:59789"/>
    </ligand>
</feature>
<proteinExistence type="inferred from homology"/>
<dbReference type="EC" id="2.1.1.177" evidence="1"/>
<dbReference type="EMBL" id="CP001616">
    <property type="protein sequence ID" value="ACQ94420.1"/>
    <property type="molecule type" value="Genomic_DNA"/>
</dbReference>
<dbReference type="RefSeq" id="WP_015879869.1">
    <property type="nucleotide sequence ID" value="NC_012691.1"/>
</dbReference>
<dbReference type="SMR" id="C4LCB6"/>
<dbReference type="STRING" id="595494.Tola_2827"/>
<dbReference type="KEGG" id="tau:Tola_2827"/>
<dbReference type="eggNOG" id="COG1576">
    <property type="taxonomic scope" value="Bacteria"/>
</dbReference>
<dbReference type="HOGENOM" id="CLU_100552_1_0_6"/>
<dbReference type="OrthoDB" id="9806643at2"/>
<dbReference type="Proteomes" id="UP000009073">
    <property type="component" value="Chromosome"/>
</dbReference>
<dbReference type="GO" id="GO:0005737">
    <property type="term" value="C:cytoplasm"/>
    <property type="evidence" value="ECO:0007669"/>
    <property type="project" value="UniProtKB-SubCell"/>
</dbReference>
<dbReference type="GO" id="GO:0070038">
    <property type="term" value="F:rRNA (pseudouridine-N3-)-methyltransferase activity"/>
    <property type="evidence" value="ECO:0007669"/>
    <property type="project" value="UniProtKB-UniRule"/>
</dbReference>
<dbReference type="CDD" id="cd18081">
    <property type="entry name" value="RlmH-like"/>
    <property type="match status" value="1"/>
</dbReference>
<dbReference type="Gene3D" id="3.40.1280.10">
    <property type="match status" value="1"/>
</dbReference>
<dbReference type="HAMAP" id="MF_00658">
    <property type="entry name" value="23SrRNA_methyltr_H"/>
    <property type="match status" value="1"/>
</dbReference>
<dbReference type="InterPro" id="IPR029028">
    <property type="entry name" value="Alpha/beta_knot_MTases"/>
</dbReference>
<dbReference type="InterPro" id="IPR003742">
    <property type="entry name" value="RlmH-like"/>
</dbReference>
<dbReference type="InterPro" id="IPR029026">
    <property type="entry name" value="tRNA_m1G_MTases_N"/>
</dbReference>
<dbReference type="NCBIfam" id="NF000984">
    <property type="entry name" value="PRK00103.1-1"/>
    <property type="match status" value="1"/>
</dbReference>
<dbReference type="NCBIfam" id="NF000986">
    <property type="entry name" value="PRK00103.1-4"/>
    <property type="match status" value="1"/>
</dbReference>
<dbReference type="NCBIfam" id="TIGR00246">
    <property type="entry name" value="tRNA_RlmH_YbeA"/>
    <property type="match status" value="1"/>
</dbReference>
<dbReference type="PANTHER" id="PTHR33603">
    <property type="entry name" value="METHYLTRANSFERASE"/>
    <property type="match status" value="1"/>
</dbReference>
<dbReference type="PANTHER" id="PTHR33603:SF1">
    <property type="entry name" value="RIBOSOMAL RNA LARGE SUBUNIT METHYLTRANSFERASE H"/>
    <property type="match status" value="1"/>
</dbReference>
<dbReference type="Pfam" id="PF02590">
    <property type="entry name" value="SPOUT_MTase"/>
    <property type="match status" value="1"/>
</dbReference>
<dbReference type="PIRSF" id="PIRSF004505">
    <property type="entry name" value="MT_bac"/>
    <property type="match status" value="1"/>
</dbReference>
<dbReference type="SUPFAM" id="SSF75217">
    <property type="entry name" value="alpha/beta knot"/>
    <property type="match status" value="1"/>
</dbReference>
<sequence length="156" mass="17330">MKIQLIAVGTKMPDWVTTGFNEYQRRFPKDMPLELLEIPAGKRGKNADIARILEKEGEQALAAVGKSSRIVTLDLPGKNWTTPQLAQQLESWKQDGRDVALLIGGPEGLSPACKAAAEQSWCLSALTMPHPLVRIVVAESLYRAWSLTTNHPYHRE</sequence>
<protein>
    <recommendedName>
        <fullName evidence="1">Ribosomal RNA large subunit methyltransferase H</fullName>
        <ecNumber evidence="1">2.1.1.177</ecNumber>
    </recommendedName>
    <alternativeName>
        <fullName evidence="1">23S rRNA (pseudouridine1915-N3)-methyltransferase</fullName>
    </alternativeName>
    <alternativeName>
        <fullName evidence="1">23S rRNA m3Psi1915 methyltransferase</fullName>
    </alternativeName>
    <alternativeName>
        <fullName evidence="1">rRNA (pseudouridine-N3-)-methyltransferase RlmH</fullName>
    </alternativeName>
</protein>